<comment type="function">
    <text evidence="1">Binds as a heterodimer with protein bS6 to the central domain of the 16S rRNA, where it helps stabilize the platform of the 30S subunit.</text>
</comment>
<comment type="subunit">
    <text evidence="1">Part of the 30S ribosomal subunit. Forms a tight heterodimer with protein bS6.</text>
</comment>
<comment type="similarity">
    <text evidence="1">Belongs to the bacterial ribosomal protein bS18 family.</text>
</comment>
<sequence length="92" mass="10114">MTDTTAPEAGAPAAAAGGARRPFFRRRKVCPFSGANAPKIDYKDVKLLQRYVSERGKIVPSRITAVSAKKQRELAKAIKRARFLALLPYVVK</sequence>
<dbReference type="EMBL" id="CP000927">
    <property type="protein sequence ID" value="ABZ71638.1"/>
    <property type="molecule type" value="Genomic_DNA"/>
</dbReference>
<dbReference type="SMR" id="B0SWL0"/>
<dbReference type="STRING" id="366602.Caul_2511"/>
<dbReference type="KEGG" id="cak:Caul_2511"/>
<dbReference type="eggNOG" id="COG0238">
    <property type="taxonomic scope" value="Bacteria"/>
</dbReference>
<dbReference type="HOGENOM" id="CLU_148710_2_1_5"/>
<dbReference type="OrthoDB" id="9812008at2"/>
<dbReference type="GO" id="GO:0022627">
    <property type="term" value="C:cytosolic small ribosomal subunit"/>
    <property type="evidence" value="ECO:0007669"/>
    <property type="project" value="TreeGrafter"/>
</dbReference>
<dbReference type="GO" id="GO:0070181">
    <property type="term" value="F:small ribosomal subunit rRNA binding"/>
    <property type="evidence" value="ECO:0007669"/>
    <property type="project" value="TreeGrafter"/>
</dbReference>
<dbReference type="GO" id="GO:0003735">
    <property type="term" value="F:structural constituent of ribosome"/>
    <property type="evidence" value="ECO:0007669"/>
    <property type="project" value="InterPro"/>
</dbReference>
<dbReference type="GO" id="GO:0006412">
    <property type="term" value="P:translation"/>
    <property type="evidence" value="ECO:0007669"/>
    <property type="project" value="UniProtKB-UniRule"/>
</dbReference>
<dbReference type="Gene3D" id="4.10.640.10">
    <property type="entry name" value="Ribosomal protein S18"/>
    <property type="match status" value="1"/>
</dbReference>
<dbReference type="HAMAP" id="MF_00270">
    <property type="entry name" value="Ribosomal_bS18"/>
    <property type="match status" value="1"/>
</dbReference>
<dbReference type="InterPro" id="IPR001648">
    <property type="entry name" value="Ribosomal_bS18"/>
</dbReference>
<dbReference type="InterPro" id="IPR018275">
    <property type="entry name" value="Ribosomal_bS18_CS"/>
</dbReference>
<dbReference type="InterPro" id="IPR036870">
    <property type="entry name" value="Ribosomal_bS18_sf"/>
</dbReference>
<dbReference type="NCBIfam" id="TIGR00165">
    <property type="entry name" value="S18"/>
    <property type="match status" value="1"/>
</dbReference>
<dbReference type="PANTHER" id="PTHR13479">
    <property type="entry name" value="30S RIBOSOMAL PROTEIN S18"/>
    <property type="match status" value="1"/>
</dbReference>
<dbReference type="PANTHER" id="PTHR13479:SF40">
    <property type="entry name" value="SMALL RIBOSOMAL SUBUNIT PROTEIN BS18M"/>
    <property type="match status" value="1"/>
</dbReference>
<dbReference type="Pfam" id="PF01084">
    <property type="entry name" value="Ribosomal_S18"/>
    <property type="match status" value="1"/>
</dbReference>
<dbReference type="PRINTS" id="PR00974">
    <property type="entry name" value="RIBOSOMALS18"/>
</dbReference>
<dbReference type="SUPFAM" id="SSF46911">
    <property type="entry name" value="Ribosomal protein S18"/>
    <property type="match status" value="1"/>
</dbReference>
<dbReference type="PROSITE" id="PS00057">
    <property type="entry name" value="RIBOSOMAL_S18"/>
    <property type="match status" value="1"/>
</dbReference>
<feature type="chain" id="PRO_1000078693" description="Small ribosomal subunit protein bS18">
    <location>
        <begin position="1"/>
        <end position="92"/>
    </location>
</feature>
<name>RS18_CAUSK</name>
<evidence type="ECO:0000255" key="1">
    <source>
        <dbReference type="HAMAP-Rule" id="MF_00270"/>
    </source>
</evidence>
<evidence type="ECO:0000305" key="2"/>
<gene>
    <name evidence="1" type="primary">rpsR</name>
    <name type="ordered locus">Caul_2511</name>
</gene>
<keyword id="KW-0687">Ribonucleoprotein</keyword>
<keyword id="KW-0689">Ribosomal protein</keyword>
<keyword id="KW-0694">RNA-binding</keyword>
<keyword id="KW-0699">rRNA-binding</keyword>
<accession>B0SWL0</accession>
<organism>
    <name type="scientific">Caulobacter sp. (strain K31)</name>
    <dbReference type="NCBI Taxonomy" id="366602"/>
    <lineage>
        <taxon>Bacteria</taxon>
        <taxon>Pseudomonadati</taxon>
        <taxon>Pseudomonadota</taxon>
        <taxon>Alphaproteobacteria</taxon>
        <taxon>Caulobacterales</taxon>
        <taxon>Caulobacteraceae</taxon>
        <taxon>Caulobacter</taxon>
    </lineage>
</organism>
<proteinExistence type="inferred from homology"/>
<protein>
    <recommendedName>
        <fullName evidence="1">Small ribosomal subunit protein bS18</fullName>
    </recommendedName>
    <alternativeName>
        <fullName evidence="2">30S ribosomal protein S18</fullName>
    </alternativeName>
</protein>
<reference key="1">
    <citation type="submission" date="2008-01" db="EMBL/GenBank/DDBJ databases">
        <title>Complete sequence of chromosome of Caulobacter sp. K31.</title>
        <authorList>
            <consortium name="US DOE Joint Genome Institute"/>
            <person name="Copeland A."/>
            <person name="Lucas S."/>
            <person name="Lapidus A."/>
            <person name="Barry K."/>
            <person name="Glavina del Rio T."/>
            <person name="Dalin E."/>
            <person name="Tice H."/>
            <person name="Pitluck S."/>
            <person name="Bruce D."/>
            <person name="Goodwin L."/>
            <person name="Thompson L.S."/>
            <person name="Brettin T."/>
            <person name="Detter J.C."/>
            <person name="Han C."/>
            <person name="Schmutz J."/>
            <person name="Larimer F."/>
            <person name="Land M."/>
            <person name="Hauser L."/>
            <person name="Kyrpides N."/>
            <person name="Kim E."/>
            <person name="Stephens C."/>
            <person name="Richardson P."/>
        </authorList>
    </citation>
    <scope>NUCLEOTIDE SEQUENCE [LARGE SCALE GENOMIC DNA]</scope>
    <source>
        <strain>K31</strain>
    </source>
</reference>